<name>RL33_ALLAM</name>
<feature type="chain" id="PRO_1000204899" description="Large ribosomal subunit protein bL33">
    <location>
        <begin position="1"/>
        <end position="55"/>
    </location>
</feature>
<reference key="1">
    <citation type="journal article" date="2009" name="J. Bacteriol.">
        <title>Genome sequences of three Agrobacterium biovars help elucidate the evolution of multichromosome genomes in bacteria.</title>
        <authorList>
            <person name="Slater S.C."/>
            <person name="Goldman B.S."/>
            <person name="Goodner B."/>
            <person name="Setubal J.C."/>
            <person name="Farrand S.K."/>
            <person name="Nester E.W."/>
            <person name="Burr T.J."/>
            <person name="Banta L."/>
            <person name="Dickerman A.W."/>
            <person name="Paulsen I."/>
            <person name="Otten L."/>
            <person name="Suen G."/>
            <person name="Welch R."/>
            <person name="Almeida N.F."/>
            <person name="Arnold F."/>
            <person name="Burton O.T."/>
            <person name="Du Z."/>
            <person name="Ewing A."/>
            <person name="Godsy E."/>
            <person name="Heisel S."/>
            <person name="Houmiel K.L."/>
            <person name="Jhaveri J."/>
            <person name="Lu J."/>
            <person name="Miller N.M."/>
            <person name="Norton S."/>
            <person name="Chen Q."/>
            <person name="Phoolcharoen W."/>
            <person name="Ohlin V."/>
            <person name="Ondrusek D."/>
            <person name="Pride N."/>
            <person name="Stricklin S.L."/>
            <person name="Sun J."/>
            <person name="Wheeler C."/>
            <person name="Wilson L."/>
            <person name="Zhu H."/>
            <person name="Wood D.W."/>
        </authorList>
    </citation>
    <scope>NUCLEOTIDE SEQUENCE [LARGE SCALE GENOMIC DNA]</scope>
    <source>
        <strain>ATCC BAA-846 / DSM 112012 / S4</strain>
    </source>
</reference>
<sequence length="55" mass="6359">MAKATTIKIKLLSTADTGFFYVTTKNSRTMTDKMTKTKYDPIARKHVEFKETKIK</sequence>
<comment type="similarity">
    <text evidence="1">Belongs to the bacterial ribosomal protein bL33 family.</text>
</comment>
<accession>B9JVH6</accession>
<dbReference type="EMBL" id="CP000633">
    <property type="protein sequence ID" value="ACM36256.1"/>
    <property type="molecule type" value="Genomic_DNA"/>
</dbReference>
<dbReference type="RefSeq" id="WP_015915679.1">
    <property type="nucleotide sequence ID" value="NC_011989.1"/>
</dbReference>
<dbReference type="SMR" id="B9JVH6"/>
<dbReference type="STRING" id="311402.Avi_1751"/>
<dbReference type="GeneID" id="60682336"/>
<dbReference type="KEGG" id="avi:Avi_1751"/>
<dbReference type="eggNOG" id="COG0267">
    <property type="taxonomic scope" value="Bacteria"/>
</dbReference>
<dbReference type="HOGENOM" id="CLU_190949_1_1_5"/>
<dbReference type="Proteomes" id="UP000001596">
    <property type="component" value="Chromosome 1"/>
</dbReference>
<dbReference type="GO" id="GO:0022625">
    <property type="term" value="C:cytosolic large ribosomal subunit"/>
    <property type="evidence" value="ECO:0007669"/>
    <property type="project" value="TreeGrafter"/>
</dbReference>
<dbReference type="GO" id="GO:0003735">
    <property type="term" value="F:structural constituent of ribosome"/>
    <property type="evidence" value="ECO:0007669"/>
    <property type="project" value="InterPro"/>
</dbReference>
<dbReference type="GO" id="GO:0006412">
    <property type="term" value="P:translation"/>
    <property type="evidence" value="ECO:0007669"/>
    <property type="project" value="UniProtKB-UniRule"/>
</dbReference>
<dbReference type="Gene3D" id="2.20.28.120">
    <property type="entry name" value="Ribosomal protein L33"/>
    <property type="match status" value="1"/>
</dbReference>
<dbReference type="HAMAP" id="MF_00294">
    <property type="entry name" value="Ribosomal_bL33"/>
    <property type="match status" value="1"/>
</dbReference>
<dbReference type="InterPro" id="IPR001705">
    <property type="entry name" value="Ribosomal_bL33"/>
</dbReference>
<dbReference type="InterPro" id="IPR018264">
    <property type="entry name" value="Ribosomal_bL33_CS"/>
</dbReference>
<dbReference type="InterPro" id="IPR038584">
    <property type="entry name" value="Ribosomal_bL33_sf"/>
</dbReference>
<dbReference type="InterPro" id="IPR011332">
    <property type="entry name" value="Ribosomal_zn-bd"/>
</dbReference>
<dbReference type="NCBIfam" id="NF001860">
    <property type="entry name" value="PRK00595.1"/>
    <property type="match status" value="1"/>
</dbReference>
<dbReference type="NCBIfam" id="TIGR01023">
    <property type="entry name" value="rpmG_bact"/>
    <property type="match status" value="1"/>
</dbReference>
<dbReference type="PANTHER" id="PTHR15238">
    <property type="entry name" value="54S RIBOSOMAL PROTEIN L39, MITOCHONDRIAL"/>
    <property type="match status" value="1"/>
</dbReference>
<dbReference type="PANTHER" id="PTHR15238:SF1">
    <property type="entry name" value="LARGE RIBOSOMAL SUBUNIT PROTEIN BL33M"/>
    <property type="match status" value="1"/>
</dbReference>
<dbReference type="Pfam" id="PF00471">
    <property type="entry name" value="Ribosomal_L33"/>
    <property type="match status" value="1"/>
</dbReference>
<dbReference type="SUPFAM" id="SSF57829">
    <property type="entry name" value="Zn-binding ribosomal proteins"/>
    <property type="match status" value="1"/>
</dbReference>
<dbReference type="PROSITE" id="PS00582">
    <property type="entry name" value="RIBOSOMAL_L33"/>
    <property type="match status" value="1"/>
</dbReference>
<keyword id="KW-1185">Reference proteome</keyword>
<keyword id="KW-0687">Ribonucleoprotein</keyword>
<keyword id="KW-0689">Ribosomal protein</keyword>
<protein>
    <recommendedName>
        <fullName evidence="1">Large ribosomal subunit protein bL33</fullName>
    </recommendedName>
    <alternativeName>
        <fullName evidence="2">50S ribosomal protein L33</fullName>
    </alternativeName>
</protein>
<organism>
    <name type="scientific">Allorhizobium ampelinum (strain ATCC BAA-846 / DSM 112012 / S4)</name>
    <name type="common">Agrobacterium vitis (strain S4)</name>
    <dbReference type="NCBI Taxonomy" id="311402"/>
    <lineage>
        <taxon>Bacteria</taxon>
        <taxon>Pseudomonadati</taxon>
        <taxon>Pseudomonadota</taxon>
        <taxon>Alphaproteobacteria</taxon>
        <taxon>Hyphomicrobiales</taxon>
        <taxon>Rhizobiaceae</taxon>
        <taxon>Rhizobium/Agrobacterium group</taxon>
        <taxon>Allorhizobium</taxon>
        <taxon>Allorhizobium ampelinum</taxon>
    </lineage>
</organism>
<proteinExistence type="inferred from homology"/>
<gene>
    <name evidence="1" type="primary">rpmG</name>
    <name type="ordered locus">Avi_1751</name>
</gene>
<evidence type="ECO:0000255" key="1">
    <source>
        <dbReference type="HAMAP-Rule" id="MF_00294"/>
    </source>
</evidence>
<evidence type="ECO:0000305" key="2"/>